<reference key="1">
    <citation type="submission" date="2004-01" db="EMBL/GenBank/DDBJ databases">
        <authorList>
            <consortium name="NIH - Zebrafish Gene Collection (ZGC) project"/>
        </authorList>
    </citation>
    <scope>NUCLEOTIDE SEQUENCE [LARGE SCALE MRNA]</scope>
    <source>
        <tissue>Pharyngula</tissue>
    </source>
</reference>
<protein>
    <recommendedName>
        <fullName>REST corepressor 2</fullName>
    </recommendedName>
</protein>
<feature type="chain" id="PRO_0000226779" description="REST corepressor 2">
    <location>
        <begin position="1"/>
        <end position="536"/>
    </location>
</feature>
<feature type="domain" description="ELM2" evidence="2">
    <location>
        <begin position="38"/>
        <end position="123"/>
    </location>
</feature>
<feature type="domain" description="SANT 1" evidence="3">
    <location>
        <begin position="124"/>
        <end position="175"/>
    </location>
</feature>
<feature type="domain" description="SANT 2" evidence="3">
    <location>
        <begin position="328"/>
        <end position="379"/>
    </location>
</feature>
<feature type="region of interest" description="Disordered" evidence="4">
    <location>
        <begin position="1"/>
        <end position="44"/>
    </location>
</feature>
<feature type="region of interest" description="Disordered" evidence="4">
    <location>
        <begin position="179"/>
        <end position="264"/>
    </location>
</feature>
<feature type="region of interest" description="Disordered" evidence="4">
    <location>
        <begin position="389"/>
        <end position="536"/>
    </location>
</feature>
<feature type="coiled-coil region" evidence="1">
    <location>
        <begin position="283"/>
        <end position="315"/>
    </location>
</feature>
<feature type="compositionally biased region" description="Basic and acidic residues" evidence="4">
    <location>
        <begin position="24"/>
        <end position="36"/>
    </location>
</feature>
<feature type="compositionally biased region" description="Acidic residues" evidence="4">
    <location>
        <begin position="197"/>
        <end position="211"/>
    </location>
</feature>
<feature type="compositionally biased region" description="Basic residues" evidence="4">
    <location>
        <begin position="249"/>
        <end position="262"/>
    </location>
</feature>
<feature type="compositionally biased region" description="Polar residues" evidence="4">
    <location>
        <begin position="391"/>
        <end position="406"/>
    </location>
</feature>
<feature type="compositionally biased region" description="Low complexity" evidence="4">
    <location>
        <begin position="422"/>
        <end position="449"/>
    </location>
</feature>
<feature type="compositionally biased region" description="Pro residues" evidence="4">
    <location>
        <begin position="450"/>
        <end position="476"/>
    </location>
</feature>
<comment type="function">
    <text evidence="5">May act as a component of a corepressor complex that represses transcription.</text>
</comment>
<comment type="subcellular location">
    <subcellularLocation>
        <location evidence="2 3">Nucleus</location>
    </subcellularLocation>
</comment>
<comment type="similarity">
    <text evidence="5">Belongs to the CoREST family.</text>
</comment>
<name>RCOR2_DANRE</name>
<proteinExistence type="evidence at transcript level"/>
<gene>
    <name type="primary">rcor2</name>
    <name type="ORF">zgc:77264</name>
</gene>
<organism>
    <name type="scientific">Danio rerio</name>
    <name type="common">Zebrafish</name>
    <name type="synonym">Brachydanio rerio</name>
    <dbReference type="NCBI Taxonomy" id="7955"/>
    <lineage>
        <taxon>Eukaryota</taxon>
        <taxon>Metazoa</taxon>
        <taxon>Chordata</taxon>
        <taxon>Craniata</taxon>
        <taxon>Vertebrata</taxon>
        <taxon>Euteleostomi</taxon>
        <taxon>Actinopterygii</taxon>
        <taxon>Neopterygii</taxon>
        <taxon>Teleostei</taxon>
        <taxon>Ostariophysi</taxon>
        <taxon>Cypriniformes</taxon>
        <taxon>Danionidae</taxon>
        <taxon>Danioninae</taxon>
        <taxon>Danio</taxon>
    </lineage>
</organism>
<dbReference type="EMBL" id="BC065331">
    <property type="protein sequence ID" value="AAH65331.1"/>
    <property type="molecule type" value="mRNA"/>
</dbReference>
<dbReference type="RefSeq" id="NP_991201.1">
    <property type="nucleotide sequence ID" value="NM_205638.1"/>
</dbReference>
<dbReference type="RefSeq" id="XP_005172320.1">
    <property type="nucleotide sequence ID" value="XM_005172263.5"/>
</dbReference>
<dbReference type="SMR" id="Q6P116"/>
<dbReference type="FunCoup" id="Q6P116">
    <property type="interactions" value="1003"/>
</dbReference>
<dbReference type="STRING" id="7955.ENSDARP00000026854"/>
<dbReference type="PaxDb" id="7955-ENSDARP00000026854"/>
<dbReference type="Ensembl" id="ENSDART00000002961">
    <property type="protein sequence ID" value="ENSDARP00000026854"/>
    <property type="gene ID" value="ENSDARG00000008278"/>
</dbReference>
<dbReference type="GeneID" id="402934"/>
<dbReference type="KEGG" id="dre:402934"/>
<dbReference type="AGR" id="ZFIN:ZDB-GENE-040426-1812"/>
<dbReference type="CTD" id="283248"/>
<dbReference type="ZFIN" id="ZDB-GENE-040426-1812">
    <property type="gene designation" value="rcor2"/>
</dbReference>
<dbReference type="eggNOG" id="KOG1194">
    <property type="taxonomic scope" value="Eukaryota"/>
</dbReference>
<dbReference type="HOGENOM" id="CLU_026741_3_1_1"/>
<dbReference type="InParanoid" id="Q6P116"/>
<dbReference type="OMA" id="RHENPSH"/>
<dbReference type="OrthoDB" id="10064338at2759"/>
<dbReference type="PhylomeDB" id="Q6P116"/>
<dbReference type="TreeFam" id="TF106450"/>
<dbReference type="PRO" id="PR:Q6P116"/>
<dbReference type="Proteomes" id="UP000000437">
    <property type="component" value="Chromosome 7"/>
</dbReference>
<dbReference type="Bgee" id="ENSDARG00000008278">
    <property type="expression patterns" value="Expressed in mature ovarian follicle and 30 other cell types or tissues"/>
</dbReference>
<dbReference type="ExpressionAtlas" id="Q6P116">
    <property type="expression patterns" value="baseline and differential"/>
</dbReference>
<dbReference type="GO" id="GO:0000118">
    <property type="term" value="C:histone deacetylase complex"/>
    <property type="evidence" value="ECO:0000318"/>
    <property type="project" value="GO_Central"/>
</dbReference>
<dbReference type="GO" id="GO:0005667">
    <property type="term" value="C:transcription regulator complex"/>
    <property type="evidence" value="ECO:0000318"/>
    <property type="project" value="GO_Central"/>
</dbReference>
<dbReference type="GO" id="GO:0003714">
    <property type="term" value="F:transcription corepressor activity"/>
    <property type="evidence" value="ECO:0000318"/>
    <property type="project" value="GO_Central"/>
</dbReference>
<dbReference type="GO" id="GO:0045892">
    <property type="term" value="P:negative regulation of DNA-templated transcription"/>
    <property type="evidence" value="ECO:0000318"/>
    <property type="project" value="GO_Central"/>
</dbReference>
<dbReference type="GO" id="GO:0006357">
    <property type="term" value="P:regulation of transcription by RNA polymerase II"/>
    <property type="evidence" value="ECO:0000318"/>
    <property type="project" value="GO_Central"/>
</dbReference>
<dbReference type="CDD" id="cd00167">
    <property type="entry name" value="SANT"/>
    <property type="match status" value="1"/>
</dbReference>
<dbReference type="FunFam" id="1.20.58.1880:FF:000001">
    <property type="entry name" value="REST corepressor 1"/>
    <property type="match status" value="1"/>
</dbReference>
<dbReference type="FunFam" id="1.10.10.60:FF:000033">
    <property type="entry name" value="REST corepressor 3"/>
    <property type="match status" value="1"/>
</dbReference>
<dbReference type="FunFam" id="4.10.1240.50:FF:000002">
    <property type="entry name" value="REST corepressor isoform X1"/>
    <property type="match status" value="1"/>
</dbReference>
<dbReference type="Gene3D" id="1.20.58.1880">
    <property type="match status" value="1"/>
</dbReference>
<dbReference type="Gene3D" id="4.10.1240.50">
    <property type="match status" value="1"/>
</dbReference>
<dbReference type="Gene3D" id="1.10.10.60">
    <property type="entry name" value="Homeodomain-like"/>
    <property type="match status" value="1"/>
</dbReference>
<dbReference type="InterPro" id="IPR000949">
    <property type="entry name" value="ELM2_dom"/>
</dbReference>
<dbReference type="InterPro" id="IPR009057">
    <property type="entry name" value="Homeodomain-like_sf"/>
</dbReference>
<dbReference type="InterPro" id="IPR049048">
    <property type="entry name" value="REST_helical"/>
</dbReference>
<dbReference type="InterPro" id="IPR001005">
    <property type="entry name" value="SANT/Myb"/>
</dbReference>
<dbReference type="InterPro" id="IPR017884">
    <property type="entry name" value="SANT_dom"/>
</dbReference>
<dbReference type="InterPro" id="IPR051066">
    <property type="entry name" value="Trans_reg/Corepressor"/>
</dbReference>
<dbReference type="PANTHER" id="PTHR16089:SF12">
    <property type="entry name" value="REST COREPRESSOR 2"/>
    <property type="match status" value="1"/>
</dbReference>
<dbReference type="PANTHER" id="PTHR16089">
    <property type="entry name" value="REST COREPRESSOR COREST PROTEIN-RELATED"/>
    <property type="match status" value="1"/>
</dbReference>
<dbReference type="Pfam" id="PF01448">
    <property type="entry name" value="ELM2"/>
    <property type="match status" value="1"/>
</dbReference>
<dbReference type="Pfam" id="PF00249">
    <property type="entry name" value="Myb_DNA-binding"/>
    <property type="match status" value="2"/>
</dbReference>
<dbReference type="Pfam" id="PF20878">
    <property type="entry name" value="REST_helical"/>
    <property type="match status" value="1"/>
</dbReference>
<dbReference type="SMART" id="SM01189">
    <property type="entry name" value="ELM2"/>
    <property type="match status" value="1"/>
</dbReference>
<dbReference type="SMART" id="SM00717">
    <property type="entry name" value="SANT"/>
    <property type="match status" value="2"/>
</dbReference>
<dbReference type="SUPFAM" id="SSF46689">
    <property type="entry name" value="Homeodomain-like"/>
    <property type="match status" value="2"/>
</dbReference>
<dbReference type="PROSITE" id="PS51156">
    <property type="entry name" value="ELM2"/>
    <property type="match status" value="1"/>
</dbReference>
<dbReference type="PROSITE" id="PS51293">
    <property type="entry name" value="SANT"/>
    <property type="match status" value="2"/>
</dbReference>
<accession>Q6P116</accession>
<evidence type="ECO:0000255" key="1"/>
<evidence type="ECO:0000255" key="2">
    <source>
        <dbReference type="PROSITE-ProRule" id="PRU00512"/>
    </source>
</evidence>
<evidence type="ECO:0000255" key="3">
    <source>
        <dbReference type="PROSITE-ProRule" id="PRU00624"/>
    </source>
</evidence>
<evidence type="ECO:0000256" key="4">
    <source>
        <dbReference type="SAM" id="MobiDB-lite"/>
    </source>
</evidence>
<evidence type="ECO:0000305" key="5"/>
<keyword id="KW-0175">Coiled coil</keyword>
<keyword id="KW-0539">Nucleus</keyword>
<keyword id="KW-1185">Reference proteome</keyword>
<keyword id="KW-0677">Repeat</keyword>
<keyword id="KW-0678">Repressor</keyword>
<keyword id="KW-0804">Transcription</keyword>
<keyword id="KW-0805">Transcription regulation</keyword>
<sequence>MERSGSGVLSRSRAKTVTNGNSQHSEEESSDEEHPNDSMIRVGGDYQAQIPEFKPDCASRYGEKDQRSMLVWSPNSQVSDAMLDEYILMAKEKHGYNMEQALGMLLWHKHDVEKSLADLANFTPFPDEWTVEDKVLFEQAFSFHGKSFHRIQQMLPDKMITSLVKYYYSWKKTRTRTSVMDRQARKLLSKREKNESNDEIEEGDPGSDSDFEINAKKESAKQNSGNGGGNEKGPSKSCLTRKENQSAQYRHHPLRARRRPPKGMHLEQEDIVALSASTDSGAVTIRQLDTQLVSLKRQVQKIKQTNSVLRNNLGDGIEDMRPREPNQKINSRWTTEEQLLAVQAVRRYGKDFAAIADVIGNKTVAQVSSFFVSYRRRFNLEEVLREWQAEQEVQGSSGRTVNTELNGSAELEDDEVKMDGISPPHSDSPLPSSEGSASGNHSSAQSSPPLTQPPPLLRPAPPSAPPSLLRQPPPLQTRPLQNRTPHNHPPPPLIRPAIASTLHQGALRNSLSSSSSSAGQLPPSLVGLKVESPQSH</sequence>